<comment type="catalytic activity">
    <reaction evidence="1">
        <text>tRNA(Phe) + L-phenylalanine + ATP = L-phenylalanyl-tRNA(Phe) + AMP + diphosphate + H(+)</text>
        <dbReference type="Rhea" id="RHEA:19413"/>
        <dbReference type="Rhea" id="RHEA-COMP:9668"/>
        <dbReference type="Rhea" id="RHEA-COMP:9699"/>
        <dbReference type="ChEBI" id="CHEBI:15378"/>
        <dbReference type="ChEBI" id="CHEBI:30616"/>
        <dbReference type="ChEBI" id="CHEBI:33019"/>
        <dbReference type="ChEBI" id="CHEBI:58095"/>
        <dbReference type="ChEBI" id="CHEBI:78442"/>
        <dbReference type="ChEBI" id="CHEBI:78531"/>
        <dbReference type="ChEBI" id="CHEBI:456215"/>
        <dbReference type="EC" id="6.1.1.20"/>
    </reaction>
</comment>
<comment type="cofactor">
    <cofactor evidence="1">
        <name>Mg(2+)</name>
        <dbReference type="ChEBI" id="CHEBI:18420"/>
    </cofactor>
    <text evidence="1">Binds 2 magnesium ions per tetramer.</text>
</comment>
<comment type="subunit">
    <text evidence="1">Tetramer of two alpha and two beta subunits.</text>
</comment>
<comment type="subcellular location">
    <subcellularLocation>
        <location evidence="1">Cytoplasm</location>
    </subcellularLocation>
</comment>
<comment type="similarity">
    <text evidence="1">Belongs to the phenylalanyl-tRNA synthetase beta subunit family. Type 1 subfamily.</text>
</comment>
<comment type="caution">
    <text evidence="2">Lacks the conserved glutamate residue in position 447 that binds magnesium; it is replaced by an alanine residue.</text>
</comment>
<sequence>MLFSLRRLKKLANLEAFSDQKVIDSLINLGFEVDQITKLNEISGIKFGQILEIRKNPEADNLWICKVQFADKIREIQTAAKNVIENKQVLAFIPGSKSGNTTFLAKKLRGHISEGMLISAVELGFNKHLLNSELDQGVLVFDPIFDLESNPLKVLELDDLILDIKLLWNRPDGNSYLVLANELAAFFKTDFSLINKEISGKFYSELKIINKTDSKIFALEIQKLPKLALVDIFLLLKSEVKIGNLAQNFSNFILIYTGQPSYCLQLEKHQQKVELIEQKVKIKYEPDTISSYHFLNQEKKPLLIPEFSDQIIMENNSFFLIMPKFNLLKVKQIKQFLKKNSLKLTQLGKNYNYGTTFIALSFLNFFLEDQKIDFSWPINFDKSLISKKTFLDLNYNELKEILGLELSQEDISKTNLILEKIGYNFDNTSFSPPFYRVDIEFFADYAADFLRFYGLEKLKDCKLEQVKAKIPNPDFEPVKLKTLGYYETNSFLLISKEENFNPLELKSQDLLTFPSQEHTKIRYSLAWQLAKITKYNQKRKITEISLYEKGSIAGWNHSLALASTIYTSEDLKKHLKILYNYDFDFLPADSEFLNPEKSQFIYLDNVLVGWLGQVAEKYNYENVNFLEILLSKVEKIPKKEGGKIKFRPYDNSQLKYRDITLSLPMKDIPDPYLKVIQKIPEIFSVKLINYVIINNQQKITYRITGPDQVCAEIDKFYK</sequence>
<evidence type="ECO:0000255" key="1">
    <source>
        <dbReference type="HAMAP-Rule" id="MF_00283"/>
    </source>
</evidence>
<evidence type="ECO:0000305" key="2"/>
<accession>Q4AA64</accession>
<reference key="1">
    <citation type="journal article" date="2005" name="J. Bacteriol.">
        <title>Swine and poultry pathogens: the complete genome sequences of two strains of Mycoplasma hyopneumoniae and a strain of Mycoplasma synoviae.</title>
        <authorList>
            <person name="Vasconcelos A.T.R."/>
            <person name="Ferreira H.B."/>
            <person name="Bizarro C.V."/>
            <person name="Bonatto S.L."/>
            <person name="Carvalho M.O."/>
            <person name="Pinto P.M."/>
            <person name="Almeida D.F."/>
            <person name="Almeida L.G.P."/>
            <person name="Almeida R."/>
            <person name="Alves-Junior L."/>
            <person name="Assuncao E.N."/>
            <person name="Azevedo V.A.C."/>
            <person name="Bogo M.R."/>
            <person name="Brigido M.M."/>
            <person name="Brocchi M."/>
            <person name="Burity H.A."/>
            <person name="Camargo A.A."/>
            <person name="Camargo S.S."/>
            <person name="Carepo M.S."/>
            <person name="Carraro D.M."/>
            <person name="de Mattos Cascardo J.C."/>
            <person name="Castro L.A."/>
            <person name="Cavalcanti G."/>
            <person name="Chemale G."/>
            <person name="Collevatti R.G."/>
            <person name="Cunha C.W."/>
            <person name="Dallagiovanna B."/>
            <person name="Dambros B.P."/>
            <person name="Dellagostin O.A."/>
            <person name="Falcao C."/>
            <person name="Fantinatti-Garboggini F."/>
            <person name="Felipe M.S.S."/>
            <person name="Fiorentin L."/>
            <person name="Franco G.R."/>
            <person name="Freitas N.S.A."/>
            <person name="Frias D."/>
            <person name="Grangeiro T.B."/>
            <person name="Grisard E.C."/>
            <person name="Guimaraes C.T."/>
            <person name="Hungria M."/>
            <person name="Jardim S.N."/>
            <person name="Krieger M.A."/>
            <person name="Laurino J.P."/>
            <person name="Lima L.F.A."/>
            <person name="Lopes M.I."/>
            <person name="Loreto E.L.S."/>
            <person name="Madeira H.M.F."/>
            <person name="Manfio G.P."/>
            <person name="Maranhao A.Q."/>
            <person name="Martinkovics C.T."/>
            <person name="Medeiros S.R.B."/>
            <person name="Moreira M.A.M."/>
            <person name="Neiva M."/>
            <person name="Ramalho-Neto C.E."/>
            <person name="Nicolas M.F."/>
            <person name="Oliveira S.C."/>
            <person name="Paixao R.F.C."/>
            <person name="Pedrosa F.O."/>
            <person name="Pena S.D.J."/>
            <person name="Pereira M."/>
            <person name="Pereira-Ferrari L."/>
            <person name="Piffer I."/>
            <person name="Pinto L.S."/>
            <person name="Potrich D.P."/>
            <person name="Salim A.C.M."/>
            <person name="Santos F.R."/>
            <person name="Schmitt R."/>
            <person name="Schneider M.P.C."/>
            <person name="Schrank A."/>
            <person name="Schrank I.S."/>
            <person name="Schuck A.F."/>
            <person name="Seuanez H.N."/>
            <person name="Silva D.W."/>
            <person name="Silva R."/>
            <person name="Silva S.C."/>
            <person name="Soares C.M.A."/>
            <person name="Souza K.R.L."/>
            <person name="Souza R.C."/>
            <person name="Staats C.C."/>
            <person name="Steffens M.B.R."/>
            <person name="Teixeira S.M.R."/>
            <person name="Urmenyi T.P."/>
            <person name="Vainstein M.H."/>
            <person name="Zuccherato L.W."/>
            <person name="Simpson A.J.G."/>
            <person name="Zaha A."/>
        </authorList>
    </citation>
    <scope>NUCLEOTIDE SEQUENCE [LARGE SCALE GENOMIC DNA]</scope>
    <source>
        <strain>J / ATCC 25934 / NCTC 10110</strain>
    </source>
</reference>
<protein>
    <recommendedName>
        <fullName evidence="1">Phenylalanine--tRNA ligase beta subunit</fullName>
        <ecNumber evidence="1">6.1.1.20</ecNumber>
    </recommendedName>
    <alternativeName>
        <fullName evidence="1">Phenylalanyl-tRNA synthetase beta subunit</fullName>
        <shortName evidence="1">PheRS</shortName>
    </alternativeName>
</protein>
<proteinExistence type="inferred from homology"/>
<keyword id="KW-0030">Aminoacyl-tRNA synthetase</keyword>
<keyword id="KW-0067">ATP-binding</keyword>
<keyword id="KW-0963">Cytoplasm</keyword>
<keyword id="KW-0436">Ligase</keyword>
<keyword id="KW-0460">Magnesium</keyword>
<keyword id="KW-0479">Metal-binding</keyword>
<keyword id="KW-0547">Nucleotide-binding</keyword>
<keyword id="KW-0648">Protein biosynthesis</keyword>
<keyword id="KW-0694">RNA-binding</keyword>
<keyword id="KW-0820">tRNA-binding</keyword>
<organism>
    <name type="scientific">Mesomycoplasma hyopneumoniae (strain J / ATCC 25934 / NCTC 10110)</name>
    <name type="common">Mycoplasma hyopneumoniae</name>
    <dbReference type="NCBI Taxonomy" id="262719"/>
    <lineage>
        <taxon>Bacteria</taxon>
        <taxon>Bacillati</taxon>
        <taxon>Mycoplasmatota</taxon>
        <taxon>Mycoplasmoidales</taxon>
        <taxon>Metamycoplasmataceae</taxon>
        <taxon>Mesomycoplasma</taxon>
    </lineage>
</organism>
<dbReference type="EC" id="6.1.1.20" evidence="1"/>
<dbReference type="EMBL" id="AE017243">
    <property type="protein sequence ID" value="AAZ44357.1"/>
    <property type="molecule type" value="Genomic_DNA"/>
</dbReference>
<dbReference type="RefSeq" id="WP_011284045.1">
    <property type="nucleotide sequence ID" value="NC_007295.1"/>
</dbReference>
<dbReference type="SMR" id="Q4AA64"/>
<dbReference type="GeneID" id="41334572"/>
<dbReference type="KEGG" id="mhj:MHJ_0266"/>
<dbReference type="eggNOG" id="COG0072">
    <property type="taxonomic scope" value="Bacteria"/>
</dbReference>
<dbReference type="eggNOG" id="COG0073">
    <property type="taxonomic scope" value="Bacteria"/>
</dbReference>
<dbReference type="HOGENOM" id="CLU_016891_2_0_14"/>
<dbReference type="OrthoDB" id="9805455at2"/>
<dbReference type="Proteomes" id="UP000000548">
    <property type="component" value="Chromosome"/>
</dbReference>
<dbReference type="GO" id="GO:0005737">
    <property type="term" value="C:cytoplasm"/>
    <property type="evidence" value="ECO:0007669"/>
    <property type="project" value="UniProtKB-SubCell"/>
</dbReference>
<dbReference type="GO" id="GO:0005524">
    <property type="term" value="F:ATP binding"/>
    <property type="evidence" value="ECO:0007669"/>
    <property type="project" value="UniProtKB-UniRule"/>
</dbReference>
<dbReference type="GO" id="GO:0000287">
    <property type="term" value="F:magnesium ion binding"/>
    <property type="evidence" value="ECO:0007669"/>
    <property type="project" value="UniProtKB-UniRule"/>
</dbReference>
<dbReference type="GO" id="GO:0004826">
    <property type="term" value="F:phenylalanine-tRNA ligase activity"/>
    <property type="evidence" value="ECO:0007669"/>
    <property type="project" value="UniProtKB-UniRule"/>
</dbReference>
<dbReference type="GO" id="GO:0000049">
    <property type="term" value="F:tRNA binding"/>
    <property type="evidence" value="ECO:0007669"/>
    <property type="project" value="UniProtKB-KW"/>
</dbReference>
<dbReference type="GO" id="GO:0006432">
    <property type="term" value="P:phenylalanyl-tRNA aminoacylation"/>
    <property type="evidence" value="ECO:0007669"/>
    <property type="project" value="UniProtKB-UniRule"/>
</dbReference>
<dbReference type="CDD" id="cd02796">
    <property type="entry name" value="tRNA_bind_bactPheRS"/>
    <property type="match status" value="1"/>
</dbReference>
<dbReference type="Gene3D" id="3.30.56.10">
    <property type="match status" value="2"/>
</dbReference>
<dbReference type="Gene3D" id="3.30.930.10">
    <property type="entry name" value="Bira Bifunctional Protein, Domain 2"/>
    <property type="match status" value="1"/>
</dbReference>
<dbReference type="Gene3D" id="2.40.50.140">
    <property type="entry name" value="Nucleic acid-binding proteins"/>
    <property type="match status" value="1"/>
</dbReference>
<dbReference type="HAMAP" id="MF_00283">
    <property type="entry name" value="Phe_tRNA_synth_beta1"/>
    <property type="match status" value="1"/>
</dbReference>
<dbReference type="InterPro" id="IPR045864">
    <property type="entry name" value="aa-tRNA-synth_II/BPL/LPL"/>
</dbReference>
<dbReference type="InterPro" id="IPR009061">
    <property type="entry name" value="DNA-bd_dom_put_sf"/>
</dbReference>
<dbReference type="InterPro" id="IPR012340">
    <property type="entry name" value="NA-bd_OB-fold"/>
</dbReference>
<dbReference type="InterPro" id="IPR004532">
    <property type="entry name" value="Phe-tRNA-ligase_IIc_bsu_bact"/>
</dbReference>
<dbReference type="InterPro" id="IPR041616">
    <property type="entry name" value="PheRS_beta_core"/>
</dbReference>
<dbReference type="InterPro" id="IPR002547">
    <property type="entry name" value="tRNA-bd_dom"/>
</dbReference>
<dbReference type="InterPro" id="IPR033714">
    <property type="entry name" value="tRNA_bind_bactPheRS"/>
</dbReference>
<dbReference type="InterPro" id="IPR005147">
    <property type="entry name" value="tRNA_synthase_B5-dom"/>
</dbReference>
<dbReference type="NCBIfam" id="NF001879">
    <property type="entry name" value="PRK00629.5-1"/>
    <property type="match status" value="1"/>
</dbReference>
<dbReference type="NCBIfam" id="NF001882">
    <property type="entry name" value="PRK00629.5-4"/>
    <property type="match status" value="1"/>
</dbReference>
<dbReference type="Pfam" id="PF03484">
    <property type="entry name" value="B5"/>
    <property type="match status" value="1"/>
</dbReference>
<dbReference type="Pfam" id="PF01588">
    <property type="entry name" value="tRNA_bind"/>
    <property type="match status" value="1"/>
</dbReference>
<dbReference type="Pfam" id="PF17759">
    <property type="entry name" value="tRNA_synthFbeta"/>
    <property type="match status" value="1"/>
</dbReference>
<dbReference type="SMART" id="SM00874">
    <property type="entry name" value="B5"/>
    <property type="match status" value="1"/>
</dbReference>
<dbReference type="SUPFAM" id="SSF55681">
    <property type="entry name" value="Class II aaRS and biotin synthetases"/>
    <property type="match status" value="1"/>
</dbReference>
<dbReference type="SUPFAM" id="SSF50249">
    <property type="entry name" value="Nucleic acid-binding proteins"/>
    <property type="match status" value="1"/>
</dbReference>
<dbReference type="SUPFAM" id="SSF46955">
    <property type="entry name" value="Putative DNA-binding domain"/>
    <property type="match status" value="1"/>
</dbReference>
<dbReference type="PROSITE" id="PS51483">
    <property type="entry name" value="B5"/>
    <property type="match status" value="1"/>
</dbReference>
<dbReference type="PROSITE" id="PS50886">
    <property type="entry name" value="TRBD"/>
    <property type="match status" value="1"/>
</dbReference>
<name>SYFB_MESHJ</name>
<feature type="chain" id="PRO_0000232809" description="Phenylalanine--tRNA ligase beta subunit">
    <location>
        <begin position="1"/>
        <end position="718"/>
    </location>
</feature>
<feature type="domain" description="tRNA-binding" evidence="1">
    <location>
        <begin position="39"/>
        <end position="153"/>
    </location>
</feature>
<feature type="domain" description="B5" evidence="1">
    <location>
        <begin position="386"/>
        <end position="460"/>
    </location>
</feature>
<feature type="binding site" evidence="1">
    <location>
        <position position="438"/>
    </location>
    <ligand>
        <name>Mg(2+)</name>
        <dbReference type="ChEBI" id="CHEBI:18420"/>
        <note>shared with alpha subunit</note>
    </ligand>
</feature>
<feature type="binding site" evidence="1">
    <location>
        <position position="444"/>
    </location>
    <ligand>
        <name>Mg(2+)</name>
        <dbReference type="ChEBI" id="CHEBI:18420"/>
        <note>shared with alpha subunit</note>
    </ligand>
</feature>
<feature type="binding site" evidence="1">
    <location>
        <position position="448"/>
    </location>
    <ligand>
        <name>Mg(2+)</name>
        <dbReference type="ChEBI" id="CHEBI:18420"/>
        <note>shared with alpha subunit</note>
    </ligand>
</feature>
<gene>
    <name evidence="1" type="primary">pheT</name>
    <name type="ordered locus">MHJ_0266</name>
</gene>